<sequence length="113" mass="12906">MEKPNYQLYRNTTLGQALQKTLDDFVGDQMIPDSLSKKIMDSFDKSINKILPHKAKNKVNFRADKLRAYRYCDNVWTFIVEQIDLRDAVEGGTVDRLKIVACDGQTKGQIGHA</sequence>
<accession>Q9NEX2</accession>
<gene>
    <name evidence="5" type="primary">gtf-2A2</name>
    <name evidence="5" type="ORF">Y111B2A.13</name>
</gene>
<name>T2AG_CAEEL</name>
<feature type="chain" id="PRO_0000194047" description="Transcription initiation factor IIA subunit 2">
    <location>
        <begin position="1"/>
        <end position="113"/>
    </location>
</feature>
<evidence type="ECO:0000250" key="1">
    <source>
        <dbReference type="UniProtKB" id="P32774"/>
    </source>
</evidence>
<evidence type="ECO:0000250" key="2">
    <source>
        <dbReference type="UniProtKB" id="P52656"/>
    </source>
</evidence>
<evidence type="ECO:0000250" key="3">
    <source>
        <dbReference type="UniProtKB" id="P52657"/>
    </source>
</evidence>
<evidence type="ECO:0000305" key="4"/>
<evidence type="ECO:0000312" key="5">
    <source>
        <dbReference type="WormBase" id="Y111B2A.13"/>
    </source>
</evidence>
<comment type="function">
    <text evidence="3">TFIIA is a component of the transcription machinery of RNA polymerase II and plays an important role in transcriptional activation. TFIIA in a complex with TBP mediates transcriptional activity.</text>
</comment>
<comment type="subunit">
    <text evidence="2">TFIIA is a heterodimer of the large unprocessed subunit 1 and a small subunit gamma. It was originally believed to be a heterotrimer of an alpha, a beta and a gamma subunit.</text>
</comment>
<comment type="subcellular location">
    <subcellularLocation>
        <location evidence="1">Nucleus</location>
    </subcellularLocation>
</comment>
<comment type="similarity">
    <text evidence="4">Belongs to the TFIIA subunit 2 family.</text>
</comment>
<protein>
    <recommendedName>
        <fullName>Transcription initiation factor IIA subunit 2</fullName>
    </recommendedName>
    <alternativeName>
        <fullName>General transcription factor IIA subunit 2</fullName>
    </alternativeName>
    <alternativeName>
        <fullName>Transcription initiation factor IIA gamma chain</fullName>
        <shortName>TFIIA-gamma</shortName>
    </alternativeName>
</protein>
<keyword id="KW-0539">Nucleus</keyword>
<keyword id="KW-1185">Reference proteome</keyword>
<keyword id="KW-0804">Transcription</keyword>
<keyword id="KW-0805">Transcription regulation</keyword>
<reference key="1">
    <citation type="journal article" date="1998" name="Science">
        <title>Genome sequence of the nematode C. elegans: a platform for investigating biology.</title>
        <authorList>
            <consortium name="The C. elegans sequencing consortium"/>
        </authorList>
    </citation>
    <scope>NUCLEOTIDE SEQUENCE [LARGE SCALE GENOMIC DNA]</scope>
    <source>
        <strain>Bristol N2</strain>
    </source>
</reference>
<proteinExistence type="inferred from homology"/>
<organism>
    <name type="scientific">Caenorhabditis elegans</name>
    <dbReference type="NCBI Taxonomy" id="6239"/>
    <lineage>
        <taxon>Eukaryota</taxon>
        <taxon>Metazoa</taxon>
        <taxon>Ecdysozoa</taxon>
        <taxon>Nematoda</taxon>
        <taxon>Chromadorea</taxon>
        <taxon>Rhabditida</taxon>
        <taxon>Rhabditina</taxon>
        <taxon>Rhabditomorpha</taxon>
        <taxon>Rhabditoidea</taxon>
        <taxon>Rhabditidae</taxon>
        <taxon>Peloderinae</taxon>
        <taxon>Caenorhabditis</taxon>
    </lineage>
</organism>
<dbReference type="EMBL" id="BX284603">
    <property type="protein sequence ID" value="CAC35842.1"/>
    <property type="molecule type" value="Genomic_DNA"/>
</dbReference>
<dbReference type="RefSeq" id="NP_499644.1">
    <property type="nucleotide sequence ID" value="NM_067243.7"/>
</dbReference>
<dbReference type="SMR" id="Q9NEX2"/>
<dbReference type="BioGRID" id="41860">
    <property type="interactions" value="3"/>
</dbReference>
<dbReference type="FunCoup" id="Q9NEX2">
    <property type="interactions" value="2638"/>
</dbReference>
<dbReference type="STRING" id="6239.Y111B2A.13.1"/>
<dbReference type="PaxDb" id="6239-Y111B2A.13"/>
<dbReference type="PeptideAtlas" id="Q9NEX2"/>
<dbReference type="EnsemblMetazoa" id="Y111B2A.13.1">
    <property type="protein sequence ID" value="Y111B2A.13.1"/>
    <property type="gene ID" value="WBGene00013736"/>
</dbReference>
<dbReference type="GeneID" id="176682"/>
<dbReference type="KEGG" id="cel:CELE_Y111B2A.13"/>
<dbReference type="UCSC" id="Y111B2A.13">
    <property type="organism name" value="c. elegans"/>
</dbReference>
<dbReference type="AGR" id="WB:WBGene00013736"/>
<dbReference type="CTD" id="176682"/>
<dbReference type="WormBase" id="Y111B2A.13">
    <property type="protein sequence ID" value="CE26630"/>
    <property type="gene ID" value="WBGene00013736"/>
    <property type="gene designation" value="gtf-2A2"/>
</dbReference>
<dbReference type="eggNOG" id="KOG3463">
    <property type="taxonomic scope" value="Eukaryota"/>
</dbReference>
<dbReference type="GeneTree" id="ENSGT00390000014572"/>
<dbReference type="HOGENOM" id="CLU_112964_3_1_1"/>
<dbReference type="InParanoid" id="Q9NEX2"/>
<dbReference type="OMA" id="QYYELYR"/>
<dbReference type="OrthoDB" id="586585at2759"/>
<dbReference type="PhylomeDB" id="Q9NEX2"/>
<dbReference type="Reactome" id="R-CEL-674695">
    <property type="pathway name" value="RNA Polymerase II Pre-transcription Events"/>
</dbReference>
<dbReference type="Reactome" id="R-CEL-6807505">
    <property type="pathway name" value="RNA polymerase II transcribes snRNA genes"/>
</dbReference>
<dbReference type="Reactome" id="R-CEL-73776">
    <property type="pathway name" value="RNA Polymerase II Promoter Escape"/>
</dbReference>
<dbReference type="Reactome" id="R-CEL-73779">
    <property type="pathway name" value="RNA Polymerase II Transcription Pre-Initiation And Promoter Opening"/>
</dbReference>
<dbReference type="Reactome" id="R-CEL-75953">
    <property type="pathway name" value="RNA Polymerase II Transcription Initiation"/>
</dbReference>
<dbReference type="Reactome" id="R-CEL-76042">
    <property type="pathway name" value="RNA Polymerase II Transcription Initiation And Promoter Clearance"/>
</dbReference>
<dbReference type="PRO" id="PR:Q9NEX2"/>
<dbReference type="Proteomes" id="UP000001940">
    <property type="component" value="Chromosome III"/>
</dbReference>
<dbReference type="Bgee" id="WBGene00013736">
    <property type="expression patterns" value="Expressed in pharyngeal muscle cell (C elegans) and 4 other cell types or tissues"/>
</dbReference>
<dbReference type="GO" id="GO:0005672">
    <property type="term" value="C:transcription factor TFIIA complex"/>
    <property type="evidence" value="ECO:0000318"/>
    <property type="project" value="GO_Central"/>
</dbReference>
<dbReference type="GO" id="GO:0016251">
    <property type="term" value="F:RNA polymerase II general transcription initiation factor activity"/>
    <property type="evidence" value="ECO:0000318"/>
    <property type="project" value="GO_Central"/>
</dbReference>
<dbReference type="GO" id="GO:0017025">
    <property type="term" value="F:TBP-class protein binding"/>
    <property type="evidence" value="ECO:0000318"/>
    <property type="project" value="GO_Central"/>
</dbReference>
<dbReference type="GO" id="GO:0051123">
    <property type="term" value="P:RNA polymerase II preinitiation complex assembly"/>
    <property type="evidence" value="ECO:0000318"/>
    <property type="project" value="GO_Central"/>
</dbReference>
<dbReference type="CDD" id="cd10014">
    <property type="entry name" value="TFIIA_gamma_C"/>
    <property type="match status" value="1"/>
</dbReference>
<dbReference type="CDD" id="cd10145">
    <property type="entry name" value="TFIIA_gamma_N"/>
    <property type="match status" value="1"/>
</dbReference>
<dbReference type="FunFam" id="1.10.287.190:FF:000001">
    <property type="entry name" value="Transcription initiation factor IIA subunit 2"/>
    <property type="match status" value="1"/>
</dbReference>
<dbReference type="FunFam" id="2.30.18.10:FF:000001">
    <property type="entry name" value="Transcription initiation factor IIA subunit 2"/>
    <property type="match status" value="1"/>
</dbReference>
<dbReference type="Gene3D" id="2.30.18.10">
    <property type="entry name" value="Transcription factor IIA (TFIIA), beta-barrel domain"/>
    <property type="match status" value="1"/>
</dbReference>
<dbReference type="Gene3D" id="1.10.287.190">
    <property type="entry name" value="Transcription factor IIA gamma subunit, alpha-helical domain"/>
    <property type="match status" value="1"/>
</dbReference>
<dbReference type="InterPro" id="IPR009083">
    <property type="entry name" value="TFIIA_a-hlx"/>
</dbReference>
<dbReference type="InterPro" id="IPR009088">
    <property type="entry name" value="TFIIA_b-brl"/>
</dbReference>
<dbReference type="InterPro" id="IPR003194">
    <property type="entry name" value="TFIIA_gsu"/>
</dbReference>
<dbReference type="InterPro" id="IPR015871">
    <property type="entry name" value="TFIIA_gsu_C"/>
</dbReference>
<dbReference type="InterPro" id="IPR015872">
    <property type="entry name" value="TFIIA_gsu_N"/>
</dbReference>
<dbReference type="PANTHER" id="PTHR10966">
    <property type="entry name" value="TRANSCRIPTION INITIATION FACTOR IIA SUBUNIT 2"/>
    <property type="match status" value="1"/>
</dbReference>
<dbReference type="Pfam" id="PF02751">
    <property type="entry name" value="TFIIA_gamma_C"/>
    <property type="match status" value="1"/>
</dbReference>
<dbReference type="Pfam" id="PF02268">
    <property type="entry name" value="TFIIA_gamma_N"/>
    <property type="match status" value="1"/>
</dbReference>
<dbReference type="PIRSF" id="PIRSF009415">
    <property type="entry name" value="Hum_TFIIA_gamma"/>
    <property type="match status" value="1"/>
</dbReference>
<dbReference type="SUPFAM" id="SSF47396">
    <property type="entry name" value="Transcription factor IIA (TFIIA), alpha-helical domain"/>
    <property type="match status" value="1"/>
</dbReference>
<dbReference type="SUPFAM" id="SSF50784">
    <property type="entry name" value="Transcription factor IIA (TFIIA), beta-barrel domain"/>
    <property type="match status" value="1"/>
</dbReference>